<feature type="chain" id="PRO_0000159948" description="Catabolic 3-dehydroquinase">
    <location>
        <begin position="1"/>
        <end position="173"/>
    </location>
</feature>
<feature type="active site" description="Proton acceptor" evidence="1">
    <location>
        <position position="26"/>
    </location>
</feature>
<feature type="active site" description="Proton donor" evidence="1">
    <location>
        <position position="128"/>
    </location>
</feature>
<feature type="binding site" evidence="1">
    <location>
        <position position="102"/>
    </location>
    <ligand>
        <name>substrate</name>
    </ligand>
</feature>
<feature type="binding site" evidence="1">
    <location>
        <position position="108"/>
    </location>
    <ligand>
        <name>substrate</name>
    </ligand>
</feature>
<feature type="binding site" evidence="1">
    <location>
        <position position="115"/>
    </location>
    <ligand>
        <name>substrate</name>
    </ligand>
</feature>
<feature type="binding site" evidence="1">
    <location>
        <begin position="129"/>
        <end position="130"/>
    </location>
    <ligand>
        <name>substrate</name>
    </ligand>
</feature>
<feature type="binding site" evidence="1">
    <location>
        <position position="139"/>
    </location>
    <ligand>
        <name>substrate</name>
    </ligand>
</feature>
<feature type="site" description="Transition state stabilizer" evidence="1">
    <location>
        <position position="21"/>
    </location>
</feature>
<feature type="sequence conflict" description="In Ref. 3; CAA24237." evidence="12" ref="3">
    <original>IYGST</original>
    <variation>STAQS</variation>
    <location>
        <begin position="25"/>
        <end position="29"/>
    </location>
</feature>
<proteinExistence type="evidence at protein level"/>
<dbReference type="EC" id="4.2.1.10" evidence="1 10"/>
<dbReference type="EMBL" id="X14603">
    <property type="protein sequence ID" value="CAA32749.1"/>
    <property type="molecule type" value="Genomic_DNA"/>
</dbReference>
<dbReference type="EMBL" id="V00869">
    <property type="protein sequence ID" value="CAA24237.1"/>
    <property type="molecule type" value="Genomic_DNA"/>
</dbReference>
<dbReference type="EMBL" id="CM002242">
    <property type="protein sequence ID" value="EAA30377.1"/>
    <property type="molecule type" value="Genomic_DNA"/>
</dbReference>
<dbReference type="PIR" id="S04251">
    <property type="entry name" value="A31277"/>
</dbReference>
<dbReference type="RefSeq" id="XP_959613.1">
    <property type="nucleotide sequence ID" value="XM_954520.2"/>
</dbReference>
<dbReference type="SMR" id="P05195"/>
<dbReference type="STRING" id="367110.P05195"/>
<dbReference type="PaxDb" id="5141-EFNCRP00000005409"/>
<dbReference type="EnsemblFungi" id="EAA30377">
    <property type="protein sequence ID" value="EAA30377"/>
    <property type="gene ID" value="NCU06023"/>
</dbReference>
<dbReference type="GeneID" id="3875772"/>
<dbReference type="KEGG" id="ncr:NCU06023"/>
<dbReference type="VEuPathDB" id="FungiDB:NCU06023"/>
<dbReference type="HOGENOM" id="CLU_090968_1_0_1"/>
<dbReference type="InParanoid" id="P05195"/>
<dbReference type="OMA" id="AYTHYSY"/>
<dbReference type="OrthoDB" id="8191625at2759"/>
<dbReference type="UniPathway" id="UPA00088">
    <property type="reaction ID" value="UER00178"/>
</dbReference>
<dbReference type="Proteomes" id="UP000001805">
    <property type="component" value="Chromosome 7, Linkage Group VII"/>
</dbReference>
<dbReference type="GO" id="GO:0003855">
    <property type="term" value="F:3-dehydroquinate dehydratase activity"/>
    <property type="evidence" value="ECO:0000318"/>
    <property type="project" value="GO_Central"/>
</dbReference>
<dbReference type="GO" id="GO:0046279">
    <property type="term" value="P:3,4-dihydroxybenzoate biosynthetic process"/>
    <property type="evidence" value="ECO:0007669"/>
    <property type="project" value="UniProtKB-UniRule"/>
</dbReference>
<dbReference type="GO" id="GO:0019631">
    <property type="term" value="P:quinate catabolic process"/>
    <property type="evidence" value="ECO:0000318"/>
    <property type="project" value="GO_Central"/>
</dbReference>
<dbReference type="CDD" id="cd00466">
    <property type="entry name" value="DHQase_II"/>
    <property type="match status" value="1"/>
</dbReference>
<dbReference type="Gene3D" id="3.40.50.9100">
    <property type="entry name" value="Dehydroquinase, class II"/>
    <property type="match status" value="1"/>
</dbReference>
<dbReference type="HAMAP" id="MF_00169">
    <property type="entry name" value="AroQ"/>
    <property type="match status" value="1"/>
</dbReference>
<dbReference type="InterPro" id="IPR001874">
    <property type="entry name" value="DHquinase_II"/>
</dbReference>
<dbReference type="InterPro" id="IPR018509">
    <property type="entry name" value="DHquinase_II_CS"/>
</dbReference>
<dbReference type="InterPro" id="IPR036441">
    <property type="entry name" value="DHquinase_II_sf"/>
</dbReference>
<dbReference type="PANTHER" id="PTHR21272">
    <property type="entry name" value="CATABOLIC 3-DEHYDROQUINASE"/>
    <property type="match status" value="1"/>
</dbReference>
<dbReference type="PANTHER" id="PTHR21272:SF5">
    <property type="entry name" value="CATABOLIC 3-DEHYDROQUINASE"/>
    <property type="match status" value="1"/>
</dbReference>
<dbReference type="Pfam" id="PF01220">
    <property type="entry name" value="DHquinase_II"/>
    <property type="match status" value="1"/>
</dbReference>
<dbReference type="PIRSF" id="PIRSF001399">
    <property type="entry name" value="DHquinase_II"/>
    <property type="match status" value="1"/>
</dbReference>
<dbReference type="SUPFAM" id="SSF52304">
    <property type="entry name" value="Type II 3-dehydroquinate dehydratase"/>
    <property type="match status" value="1"/>
</dbReference>
<dbReference type="PROSITE" id="PS01029">
    <property type="entry name" value="DEHYDROQUINASE_II"/>
    <property type="match status" value="1"/>
</dbReference>
<organism>
    <name type="scientific">Neurospora crassa (strain ATCC 24698 / 74-OR23-1A / CBS 708.71 / DSM 1257 / FGSC 987)</name>
    <dbReference type="NCBI Taxonomy" id="367110"/>
    <lineage>
        <taxon>Eukaryota</taxon>
        <taxon>Fungi</taxon>
        <taxon>Dikarya</taxon>
        <taxon>Ascomycota</taxon>
        <taxon>Pezizomycotina</taxon>
        <taxon>Sordariomycetes</taxon>
        <taxon>Sordariomycetidae</taxon>
        <taxon>Sordariales</taxon>
        <taxon>Sordariaceae</taxon>
        <taxon>Neurospora</taxon>
    </lineage>
</organism>
<accession>P05195</accession>
<accession>Q7RVA3</accession>
<name>3DHQ_NEUCR</name>
<protein>
    <recommendedName>
        <fullName evidence="1">Catabolic 3-dehydroquinase</fullName>
        <shortName evidence="1">cDHQase</shortName>
        <ecNumber evidence="1 10">4.2.1.10</ecNumber>
    </recommendedName>
    <alternativeName>
        <fullName evidence="1">3-dehydroquinate dehydratase</fullName>
    </alternativeName>
    <alternativeName>
        <fullName evidence="11">Quinic acid degradation cluster protein 2f</fullName>
    </alternativeName>
</protein>
<keyword id="KW-0456">Lyase</keyword>
<keyword id="KW-0672">Quinate metabolism</keyword>
<keyword id="KW-1185">Reference proteome</keyword>
<comment type="function">
    <text evidence="1 3 4 8 9 13">3-dehydroquinate dehydratase; part of the qa gene cluster that mediates the catabolism of quinic acid (QA) and as such, allows the use of QA as a sole carbon source (By similarity) (PubMed:126226, PubMed:143663, PubMed:2525625, PubMed:6458044). Catalyzes the second reaction in the inducible quinic acid catabolic pathway by converting 3-dehydroquinate into 3-dehydroshikimate (PubMed:143663). The qa cluster encodes 3 inducible enymes (qa-2, qa-3 and qa-4) catalyzing the first three reactions in the catabolism of quinic acid to protocatechuic acid (also known as 3,4-Dihydroxybenzoic acid) (Probable).</text>
</comment>
<comment type="catalytic activity">
    <reaction evidence="1 3 10">
        <text>3-dehydroquinate = 3-dehydroshikimate + H2O</text>
        <dbReference type="Rhea" id="RHEA:21096"/>
        <dbReference type="ChEBI" id="CHEBI:15377"/>
        <dbReference type="ChEBI" id="CHEBI:16630"/>
        <dbReference type="ChEBI" id="CHEBI:32364"/>
        <dbReference type="EC" id="4.2.1.10"/>
    </reaction>
    <physiologicalReaction direction="left-to-right" evidence="3 10">
        <dbReference type="Rhea" id="RHEA:21097"/>
    </physiologicalReaction>
</comment>
<comment type="biophysicochemical properties">
    <kinetics>
        <KM evidence="10">450 uM for quinate</KM>
        <KM evidence="10">1.7 mM for shikimate</KM>
        <KM evidence="10">150 uM for NAD(+)</KM>
    </kinetics>
</comment>
<comment type="pathway">
    <text evidence="1 3">Aromatic compound metabolism; 3,4-dihydroxybenzoate biosynthesis; 3,4-dihydroxybenzoate from 3-dehydroquinate: step 1/2.</text>
</comment>
<comment type="subunit">
    <text evidence="1">Homododecamer. Adopts a ring-like structure, composed of an arrangement of two hexameric rings stacked on top of one another.</text>
</comment>
<comment type="induction">
    <text evidence="2 5 6 7 9">Expression is induced in the presence of quinic acid (PubMed:144915, PubMed:6458044). The quinic acid (qa) gene cluster is subject to two levels of gene control: a primary system which responds to the presence of quinic acid via the qa-1S repressor protein that blocks the qa-1F activator, and a secondary system which represses transcription of qa genes in the presence of a preferred carbon source such as glucose (PubMed:12477937, PubMed:17597928, PubMed:19236936, PubMed:6458044).</text>
</comment>
<comment type="similarity">
    <text evidence="1">Belongs to the type-II 3-dehydroquinase family.</text>
</comment>
<evidence type="ECO:0000255" key="1">
    <source>
        <dbReference type="HAMAP-Rule" id="MF_03136"/>
    </source>
</evidence>
<evidence type="ECO:0000269" key="2">
    <source>
    </source>
</evidence>
<evidence type="ECO:0000269" key="3">
    <source>
    </source>
</evidence>
<evidence type="ECO:0000269" key="4">
    <source>
    </source>
</evidence>
<evidence type="ECO:0000269" key="5">
    <source>
    </source>
</evidence>
<evidence type="ECO:0000269" key="6">
    <source>
    </source>
</evidence>
<evidence type="ECO:0000269" key="7">
    <source>
    </source>
</evidence>
<evidence type="ECO:0000269" key="8">
    <source>
    </source>
</evidence>
<evidence type="ECO:0000269" key="9">
    <source>
    </source>
</evidence>
<evidence type="ECO:0000269" key="10">
    <source>
    </source>
</evidence>
<evidence type="ECO:0000303" key="11">
    <source>
    </source>
</evidence>
<evidence type="ECO:0000305" key="12"/>
<evidence type="ECO:0000305" key="13">
    <source>
    </source>
</evidence>
<sequence>MASPRHILLINGPNLNLLGTREPQIYGSTTLHDIEQASQTLASSLGLRLTTFQSNHEGAIIDRIHQAAGFVPSPPSPSPSSAATTTEAGLGPGDKVSAIIINPGAYTHTSIGIRDALLGTGIPFVEVHVSNVHAREAFRHHSYLSDKAVAVICGLGPFGYSAALDFLGRHMKF</sequence>
<gene>
    <name evidence="1" type="primary">qa-2</name>
    <name type="ORF">NCU06023</name>
</gene>
<reference key="1">
    <citation type="journal article" date="1989" name="J. Mol. Biol.">
        <title>DNA sequence, organization and regulation of the qa gene cluster of Neurospora crassa.</title>
        <authorList>
            <person name="Geever R.F."/>
            <person name="Huiet L."/>
            <person name="Baum J.A."/>
            <person name="Tyler B.M."/>
            <person name="Patel V.B."/>
            <person name="Rutledge B.J."/>
            <person name="Case M.E."/>
            <person name="Giles N.H."/>
        </authorList>
    </citation>
    <scope>NUCLEOTIDE SEQUENCE [GENOMIC DNA]</scope>
    <source>
        <strain>ATCC 24698 / 74-OR23-1A / CBS 708.71 / DSM 1257 / FGSC 987</strain>
    </source>
</reference>
<reference key="2">
    <citation type="journal article" date="2003" name="Nature">
        <title>The genome sequence of the filamentous fungus Neurospora crassa.</title>
        <authorList>
            <person name="Galagan J.E."/>
            <person name="Calvo S.E."/>
            <person name="Borkovich K.A."/>
            <person name="Selker E.U."/>
            <person name="Read N.D."/>
            <person name="Jaffe D.B."/>
            <person name="FitzHugh W."/>
            <person name="Ma L.-J."/>
            <person name="Smirnov S."/>
            <person name="Purcell S."/>
            <person name="Rehman B."/>
            <person name="Elkins T."/>
            <person name="Engels R."/>
            <person name="Wang S."/>
            <person name="Nielsen C.B."/>
            <person name="Butler J."/>
            <person name="Endrizzi M."/>
            <person name="Qui D."/>
            <person name="Ianakiev P."/>
            <person name="Bell-Pedersen D."/>
            <person name="Nelson M.A."/>
            <person name="Werner-Washburne M."/>
            <person name="Selitrennikoff C.P."/>
            <person name="Kinsey J.A."/>
            <person name="Braun E.L."/>
            <person name="Zelter A."/>
            <person name="Schulte U."/>
            <person name="Kothe G.O."/>
            <person name="Jedd G."/>
            <person name="Mewes H.-W."/>
            <person name="Staben C."/>
            <person name="Marcotte E."/>
            <person name="Greenberg D."/>
            <person name="Roy A."/>
            <person name="Foley K."/>
            <person name="Naylor J."/>
            <person name="Stange-Thomann N."/>
            <person name="Barrett R."/>
            <person name="Gnerre S."/>
            <person name="Kamal M."/>
            <person name="Kamvysselis M."/>
            <person name="Mauceli E.W."/>
            <person name="Bielke C."/>
            <person name="Rudd S."/>
            <person name="Frishman D."/>
            <person name="Krystofova S."/>
            <person name="Rasmussen C."/>
            <person name="Metzenberg R.L."/>
            <person name="Perkins D.D."/>
            <person name="Kroken S."/>
            <person name="Cogoni C."/>
            <person name="Macino G."/>
            <person name="Catcheside D.E.A."/>
            <person name="Li W."/>
            <person name="Pratt R.J."/>
            <person name="Osmani S.A."/>
            <person name="DeSouza C.P.C."/>
            <person name="Glass N.L."/>
            <person name="Orbach M.J."/>
            <person name="Berglund J.A."/>
            <person name="Voelker R."/>
            <person name="Yarden O."/>
            <person name="Plamann M."/>
            <person name="Seiler S."/>
            <person name="Dunlap J.C."/>
            <person name="Radford A."/>
            <person name="Aramayo R."/>
            <person name="Natvig D.O."/>
            <person name="Alex L.A."/>
            <person name="Mannhaupt G."/>
            <person name="Ebbole D.J."/>
            <person name="Freitag M."/>
            <person name="Paulsen I."/>
            <person name="Sachs M.S."/>
            <person name="Lander E.S."/>
            <person name="Nusbaum C."/>
            <person name="Birren B.W."/>
        </authorList>
    </citation>
    <scope>NUCLEOTIDE SEQUENCE [LARGE SCALE GENOMIC DNA]</scope>
    <source>
        <strain>ATCC 24698 / 74-OR23-1A / CBS 708.71 / DSM 1257 / FGSC 987</strain>
    </source>
</reference>
<reference key="3">
    <citation type="journal article" date="1982" name="Proc. Natl. Acad. Sci. U.S.A.">
        <title>5'-Untranslated sequences of two structural genes in the qa gene cluster of Neurospora crassa.</title>
        <authorList>
            <person name="Alton N.K."/>
            <person name="Buxton F."/>
            <person name="Patel V."/>
            <person name="Giles N.H."/>
            <person name="Vapnek D."/>
        </authorList>
    </citation>
    <scope>NUCLEOTIDE SEQUENCE [GENOMIC DNA] OF 1-124</scope>
</reference>
<reference key="4">
    <citation type="journal article" date="1975" name="J. Bacteriol.">
        <title>Effect of mutations in the qa gene cluster of Neurospora crassa on the enzyme catabolic dehydroquinase.</title>
        <authorList>
            <person name="Jacobson J.W."/>
            <person name="Hautala J.A."/>
            <person name="Case M.E."/>
            <person name="Giles N.H."/>
        </authorList>
    </citation>
    <scope>FUNCTION</scope>
    <scope>CATALYTIC ACTIVITY</scope>
</reference>
<reference key="5">
    <citation type="journal article" date="1975" name="Proc. Natl. Acad. Sci. U.S.A.">
        <title>Genetic evidence on the organization and action of the qa-1 gene product: a protein regulating the induction of three enzymes in quinate catabolism in Neurospora crassa.</title>
        <authorList>
            <person name="Case M.E."/>
            <person name="Giles N.H."/>
        </authorList>
    </citation>
    <scope>FUNCTION</scope>
</reference>
<reference key="6">
    <citation type="journal article" date="1976" name="Mol. Gen. Genet.">
        <title>Gene order in the qa gene cluster of Neurospora crassa.</title>
        <authorList>
            <person name="Case M.E."/>
            <person name="Giles N.H."/>
        </authorList>
    </citation>
    <scope>IDENTIFICATION WITHIN THE QA CLUSTER</scope>
</reference>
<reference key="7">
    <citation type="journal article" date="1977" name="Proc. Natl. Acad. Sci. U.S.A.">
        <title>Expression in Escherichia coli K-12 of the structural gene for catabolic dehydroquinase of Neurospora crassa.</title>
        <authorList>
            <person name="Vapnek D."/>
            <person name="Hautala J.A."/>
            <person name="Jacobson J.W."/>
            <person name="Giles N.H."/>
            <person name="Kushner S.R."/>
        </authorList>
    </citation>
    <scope>FUNCTION</scope>
    <scope>CATALYTIC ACTIVITY</scope>
    <scope>PATHWAY</scope>
</reference>
<reference key="8">
    <citation type="journal article" date="1977" name="Proc. Natl. Acad. Sci. U.S.A.">
        <title>Proof of de novo synthesis of the qa enzymes of Neurospora crassa during induction.</title>
        <authorList>
            <person name="Reinert W.R."/>
            <person name="Giles N.H."/>
        </authorList>
    </citation>
    <scope>INDUCTION</scope>
</reference>
<reference key="9">
    <citation type="journal article" date="1981" name="Proc. Natl. Acad. Sci. U.S.A.">
        <title>Genetic organization and transcriptional regulation in the qa gene cluster of Neurospora crassa.</title>
        <authorList>
            <person name="Patel V.B."/>
            <person name="Schweizer M."/>
            <person name="Dykstra C.C."/>
            <person name="Kushner S.R."/>
            <person name="Giles N.H."/>
        </authorList>
    </citation>
    <scope>FUNCTION</scope>
    <scope>INDUCTION</scope>
</reference>
<reference key="10">
    <citation type="journal article" date="1993" name="Biochem. J.">
        <title>Characterization of the 3-dehydroquinase domain of the pentafunctional AROM protein, and the quinate dehydrogenase from Aspergillus nidulans, and the overproduction of the type II 3-dehydroquinase from neurospora crassa.</title>
        <authorList>
            <person name="Hawkins A.R."/>
            <person name="Moore J.D."/>
            <person name="Adeokun A.M."/>
        </authorList>
    </citation>
    <scope>FUNCTION</scope>
    <scope>CATALYTIC ACTIVITY</scope>
    <scope>BIOPHYSICOCHEMICAL PROPERTIES</scope>
</reference>
<reference key="11">
    <citation type="journal article" date="2002" name="Proc. Natl. Acad. Sci. U.S.A.">
        <title>An ensemble method for identifying regulatory circuits with special reference to the qa gene cluster of Neurospora crassa.</title>
        <authorList>
            <person name="Battogtokh D."/>
            <person name="Asch D.K."/>
            <person name="Case M.E."/>
            <person name="Arnold J."/>
            <person name="Schuttler H.B."/>
        </authorList>
    </citation>
    <scope>INDUCTION</scope>
</reference>
<reference key="12">
    <citation type="journal article" date="2007" name="Bioinformation">
        <title>Genome-wide expression analysis of genetic networks in Neurospora crassa.</title>
        <authorList>
            <person name="Logan D.A."/>
            <person name="Koch A.L."/>
            <person name="Dong W."/>
            <person name="Griffith J."/>
            <person name="Nilsen R."/>
            <person name="Case M.E."/>
            <person name="Schuettler H.B."/>
            <person name="Arnold J."/>
        </authorList>
    </citation>
    <scope>INDUCTION</scope>
</reference>
<reference key="13">
    <citation type="journal article" date="2009" name="Fungal Genet. Biol.">
        <title>Catabolite repression directly affects transcription of the qa-y gene of Neurospora crassa.</title>
        <authorList>
            <person name="Arnett D.R."/>
            <person name="Lorimer H.E."/>
            <person name="Asch D.K."/>
        </authorList>
    </citation>
    <scope>INDUCTION</scope>
</reference>